<proteinExistence type="evidence at protein level"/>
<keyword id="KW-0002">3D-structure</keyword>
<keyword id="KW-0903">Direct protein sequencing</keyword>
<keyword id="KW-0520">NAD</keyword>
<keyword id="KW-0560">Oxidoreductase</keyword>
<comment type="function">
    <text evidence="2 3">Involved in an anaerobic toluene degradation pathway (PubMed:10629170). Active subunit that catalyzes the oxidation of 2-(alpha-hydroxybenzyl)succinyl-CoA to 2-benzoylsuccinyl-CoA (PubMed:34601806). In vitro, can catalyze the NADH-dependent reduction of the artificial substrates 2,2-dichloroacetophene and 2,4'-dichloroacetophenone (PubMed:34601806).</text>
</comment>
<comment type="catalytic activity">
    <reaction evidence="3">
        <text>(2S)-[(R)-hydroxy(phenyl)methyl]succinyl-CoA + NAD(+) = (S)-2-benzoylsuccinyl-CoA + NADH + H(+)</text>
        <dbReference type="Rhea" id="RHEA:70231"/>
        <dbReference type="ChEBI" id="CHEBI:15378"/>
        <dbReference type="ChEBI" id="CHEBI:57540"/>
        <dbReference type="ChEBI" id="CHEBI:57945"/>
        <dbReference type="ChEBI" id="CHEBI:189059"/>
        <dbReference type="ChEBI" id="CHEBI:189060"/>
        <dbReference type="EC" id="1.1.1.429"/>
    </reaction>
    <physiologicalReaction direction="left-to-right" evidence="3">
        <dbReference type="Rhea" id="RHEA:70232"/>
    </physiologicalReaction>
</comment>
<comment type="activity regulation">
    <text evidence="8">Activity is probably regulated by the inactive BbsC subunit.</text>
</comment>
<comment type="biophysicochemical properties">
    <phDependence>
        <text evidence="3">Optimum pH is 6.2.</text>
    </phDependence>
</comment>
<comment type="pathway">
    <text evidence="3 7">Xenobiotic degradation; toluene degradation.</text>
</comment>
<comment type="subunit">
    <text evidence="3">Heterotetramer composed of 2 inactive BbsC subunits and 2 active BbsD subunits.</text>
</comment>
<comment type="induction">
    <text evidence="2">Induced by toluene.</text>
</comment>
<comment type="similarity">
    <text evidence="6">Belongs to the short-chain dehydrogenases/reductases (SDR) family.</text>
</comment>
<accession>Q9KJF1</accession>
<name>BBSD_THAAR</name>
<evidence type="ECO:0000255" key="1">
    <source>
        <dbReference type="PROSITE-ProRule" id="PRU10001"/>
    </source>
</evidence>
<evidence type="ECO:0000269" key="2">
    <source>
    </source>
</evidence>
<evidence type="ECO:0000269" key="3">
    <source>
    </source>
</evidence>
<evidence type="ECO:0000303" key="4">
    <source>
    </source>
</evidence>
<evidence type="ECO:0000303" key="5">
    <source>
    </source>
</evidence>
<evidence type="ECO:0000305" key="6"/>
<evidence type="ECO:0000305" key="7">
    <source>
    </source>
</evidence>
<evidence type="ECO:0000305" key="8">
    <source>
    </source>
</evidence>
<evidence type="ECO:0007744" key="9">
    <source>
        <dbReference type="PDB" id="7PCS"/>
    </source>
</evidence>
<evidence type="ECO:0007829" key="10">
    <source>
        <dbReference type="PDB" id="7PCS"/>
    </source>
</evidence>
<gene>
    <name evidence="4" type="primary">bbsD</name>
</gene>
<sequence length="248" mass="26170">MGIQNRVALITGSASGMGKQTALRFAEQGAAVVINDIDAEKVRATVDEFSARGHRVLGAVADIGNKAAVDGMVKQTIDAFGRIDILVNNAGMERAGALRKLSEADWDVTINVNLKGTFLCTQAVHGHMVENKHGRIVNIASRAWLGGAGQTPYSSAKAGVVGMTRALAIELGRAGITVNCVAPGLIHTPMWDELPEKDQQFLLSRQPTGKLGEPDDIANTLLFLADDDSGFVTGQVLYVCGGRSLFAG</sequence>
<organism>
    <name type="scientific">Thauera aromatica</name>
    <dbReference type="NCBI Taxonomy" id="59405"/>
    <lineage>
        <taxon>Bacteria</taxon>
        <taxon>Pseudomonadati</taxon>
        <taxon>Pseudomonadota</taxon>
        <taxon>Betaproteobacteria</taxon>
        <taxon>Rhodocyclales</taxon>
        <taxon>Zoogloeaceae</taxon>
        <taxon>Thauera</taxon>
    </lineage>
</organism>
<protein>
    <recommendedName>
        <fullName evidence="6">(2S)-[(R)-hydroxy(phenyl)methyl]succinyl-CoA dehydrogenase subunit BbsD</fullName>
        <ecNumber evidence="3">1.1.1.429</ecNumber>
    </recommendedName>
    <alternativeName>
        <fullName evidence="5">(S,R)-2-(alpha-hydroxybenzyl)succinyl-CoA dehydrogenase subunit BbsD</fullName>
    </alternativeName>
</protein>
<reference key="1">
    <citation type="journal article" date="2000" name="J. Bacteriol.">
        <title>Anaerobic toluene catabolism of Thauera aromatica: the bbs operon codes for enzymes of beta-oxidation of the intermediate benzylsuccinate.</title>
        <authorList>
            <person name="Leuthner B."/>
            <person name="Heider J."/>
        </authorList>
    </citation>
    <scope>NUCLEOTIDE SEQUENCE [GENOMIC DNA]</scope>
    <scope>PROTEIN SEQUENCE OF 2-9</scope>
    <scope>PATHWAY</scope>
    <scope>INDUCTION</scope>
    <source>
        <strain>DSM 6984 / CIP 107765 / K172</strain>
    </source>
</reference>
<reference evidence="9" key="2">
    <citation type="journal article" date="2022" name="FEBS J.">
        <title>Inactive pseudoenzyme subunits in heterotetrameric BbsCD, a novel short-chain alcohol dehydrogenase involved in anaerobic toluene degradation.</title>
        <authorList>
            <person name="von Horsten S."/>
            <person name="Lippert M.L."/>
            <person name="Geisselbrecht Y."/>
            <person name="Schuehle K."/>
            <person name="Schall I."/>
            <person name="Essen L.O."/>
            <person name="Heider J."/>
        </authorList>
    </citation>
    <scope>X-RAY CRYSTALLOGRAPHY (2.25 ANGSTROMS) IN COMPLEX WITH BBSC AND NAD</scope>
    <scope>FUNCTION</scope>
    <scope>CATALYTIC ACTIVITY</scope>
    <scope>ACTIVITY REGULATION</scope>
    <scope>BIOPHYSICOCHEMICAL PROPERTIES</scope>
    <scope>PATHWAY</scope>
    <scope>SUBUNIT</scope>
    <scope>ACTIVE SITE</scope>
</reference>
<dbReference type="EC" id="1.1.1.429" evidence="3"/>
<dbReference type="EMBL" id="AF173961">
    <property type="protein sequence ID" value="AAF89839.1"/>
    <property type="molecule type" value="Genomic_DNA"/>
</dbReference>
<dbReference type="PDB" id="7PCS">
    <property type="method" value="X-ray"/>
    <property type="resolution" value="2.25 A"/>
    <property type="chains" value="B/D=1-248"/>
</dbReference>
<dbReference type="PDBsum" id="7PCS"/>
<dbReference type="SMR" id="Q9KJF1"/>
<dbReference type="KEGG" id="ag:AAF89839"/>
<dbReference type="BioCyc" id="MetaCyc:MONOMER-690"/>
<dbReference type="UniPathway" id="UPA00273"/>
<dbReference type="GO" id="GO:0016616">
    <property type="term" value="F:oxidoreductase activity, acting on the CH-OH group of donors, NAD or NADP as acceptor"/>
    <property type="evidence" value="ECO:0007669"/>
    <property type="project" value="TreeGrafter"/>
</dbReference>
<dbReference type="GO" id="GO:0030497">
    <property type="term" value="P:fatty acid elongation"/>
    <property type="evidence" value="ECO:0007669"/>
    <property type="project" value="TreeGrafter"/>
</dbReference>
<dbReference type="GO" id="GO:0042203">
    <property type="term" value="P:toluene catabolic process"/>
    <property type="evidence" value="ECO:0007669"/>
    <property type="project" value="UniProtKB-UniPathway"/>
</dbReference>
<dbReference type="FunFam" id="3.40.50.720:FF:000173">
    <property type="entry name" value="3-oxoacyl-[acyl-carrier protein] reductase"/>
    <property type="match status" value="1"/>
</dbReference>
<dbReference type="Gene3D" id="3.40.50.720">
    <property type="entry name" value="NAD(P)-binding Rossmann-like Domain"/>
    <property type="match status" value="1"/>
</dbReference>
<dbReference type="InterPro" id="IPR036291">
    <property type="entry name" value="NAD(P)-bd_dom_sf"/>
</dbReference>
<dbReference type="InterPro" id="IPR020904">
    <property type="entry name" value="Sc_DH/Rdtase_CS"/>
</dbReference>
<dbReference type="InterPro" id="IPR002347">
    <property type="entry name" value="SDR_fam"/>
</dbReference>
<dbReference type="NCBIfam" id="NF005559">
    <property type="entry name" value="PRK07231.1"/>
    <property type="match status" value="1"/>
</dbReference>
<dbReference type="NCBIfam" id="NF009466">
    <property type="entry name" value="PRK12826.1-2"/>
    <property type="match status" value="1"/>
</dbReference>
<dbReference type="PANTHER" id="PTHR42760:SF40">
    <property type="entry name" value="3-OXOACYL-[ACYL-CARRIER-PROTEIN] REDUCTASE, CHLOROPLASTIC"/>
    <property type="match status" value="1"/>
</dbReference>
<dbReference type="PANTHER" id="PTHR42760">
    <property type="entry name" value="SHORT-CHAIN DEHYDROGENASES/REDUCTASES FAMILY MEMBER"/>
    <property type="match status" value="1"/>
</dbReference>
<dbReference type="Pfam" id="PF13561">
    <property type="entry name" value="adh_short_C2"/>
    <property type="match status" value="1"/>
</dbReference>
<dbReference type="PRINTS" id="PR00081">
    <property type="entry name" value="GDHRDH"/>
</dbReference>
<dbReference type="PRINTS" id="PR00080">
    <property type="entry name" value="SDRFAMILY"/>
</dbReference>
<dbReference type="SUPFAM" id="SSF51735">
    <property type="entry name" value="NAD(P)-binding Rossmann-fold domains"/>
    <property type="match status" value="1"/>
</dbReference>
<dbReference type="PROSITE" id="PS00061">
    <property type="entry name" value="ADH_SHORT"/>
    <property type="match status" value="1"/>
</dbReference>
<feature type="initiator methionine" description="Removed" evidence="2">
    <location>
        <position position="1"/>
    </location>
</feature>
<feature type="chain" id="PRO_0000457323" description="(2S)-[(R)-hydroxy(phenyl)methyl]succinyl-CoA dehydrogenase subunit BbsD">
    <location>
        <begin position="2"/>
        <end position="248"/>
    </location>
</feature>
<feature type="active site" description="Proton acceptor" evidence="1 8">
    <location>
        <position position="153"/>
    </location>
</feature>
<feature type="binding site" evidence="3 9">
    <location>
        <position position="15"/>
    </location>
    <ligand>
        <name>NAD(+)</name>
        <dbReference type="ChEBI" id="CHEBI:57540"/>
    </ligand>
</feature>
<feature type="binding site" evidence="3 9">
    <location>
        <position position="36"/>
    </location>
    <ligand>
        <name>NAD(+)</name>
        <dbReference type="ChEBI" id="CHEBI:57540"/>
    </ligand>
</feature>
<feature type="binding site" evidence="3 9">
    <location>
        <position position="62"/>
    </location>
    <ligand>
        <name>NAD(+)</name>
        <dbReference type="ChEBI" id="CHEBI:57540"/>
    </ligand>
</feature>
<feature type="binding site" evidence="3 9">
    <location>
        <position position="63"/>
    </location>
    <ligand>
        <name>NAD(+)</name>
        <dbReference type="ChEBI" id="CHEBI:57540"/>
    </ligand>
</feature>
<feature type="binding site" evidence="3 9">
    <location>
        <position position="89"/>
    </location>
    <ligand>
        <name>NAD(+)</name>
        <dbReference type="ChEBI" id="CHEBI:57540"/>
    </ligand>
</feature>
<feature type="binding site" evidence="3 9">
    <location>
        <position position="153"/>
    </location>
    <ligand>
        <name>NAD(+)</name>
        <dbReference type="ChEBI" id="CHEBI:57540"/>
    </ligand>
</feature>
<feature type="binding site" evidence="3 9">
    <location>
        <position position="157"/>
    </location>
    <ligand>
        <name>NAD(+)</name>
        <dbReference type="ChEBI" id="CHEBI:57540"/>
    </ligand>
</feature>
<feature type="strand" evidence="10">
    <location>
        <begin position="7"/>
        <end position="10"/>
    </location>
</feature>
<feature type="helix" evidence="10">
    <location>
        <begin position="16"/>
        <end position="27"/>
    </location>
</feature>
<feature type="strand" evidence="10">
    <location>
        <begin position="31"/>
        <end position="37"/>
    </location>
</feature>
<feature type="helix" evidence="10">
    <location>
        <begin position="39"/>
        <end position="51"/>
    </location>
</feature>
<feature type="strand" evidence="10">
    <location>
        <begin position="56"/>
        <end position="60"/>
    </location>
</feature>
<feature type="helix" evidence="10">
    <location>
        <begin position="66"/>
        <end position="80"/>
    </location>
</feature>
<feature type="strand" evidence="10">
    <location>
        <begin position="85"/>
        <end position="88"/>
    </location>
</feature>
<feature type="helix" evidence="10">
    <location>
        <begin position="98"/>
        <end position="100"/>
    </location>
</feature>
<feature type="helix" evidence="10">
    <location>
        <begin position="103"/>
        <end position="131"/>
    </location>
</feature>
<feature type="strand" evidence="10">
    <location>
        <begin position="134"/>
        <end position="139"/>
    </location>
</feature>
<feature type="helix" evidence="10">
    <location>
        <begin position="142"/>
        <end position="145"/>
    </location>
</feature>
<feature type="helix" evidence="10">
    <location>
        <begin position="151"/>
        <end position="171"/>
    </location>
</feature>
<feature type="helix" evidence="10">
    <location>
        <begin position="172"/>
        <end position="174"/>
    </location>
</feature>
<feature type="strand" evidence="10">
    <location>
        <begin position="176"/>
        <end position="183"/>
    </location>
</feature>
<feature type="helix" evidence="10">
    <location>
        <begin position="189"/>
        <end position="192"/>
    </location>
</feature>
<feature type="helix" evidence="10">
    <location>
        <begin position="196"/>
        <end position="204"/>
    </location>
</feature>
<feature type="helix" evidence="10">
    <location>
        <begin position="214"/>
        <end position="225"/>
    </location>
</feature>
<feature type="helix" evidence="10">
    <location>
        <begin position="227"/>
        <end position="229"/>
    </location>
</feature>
<feature type="strand" evidence="10">
    <location>
        <begin position="236"/>
        <end position="240"/>
    </location>
</feature>
<feature type="helix" evidence="10">
    <location>
        <begin position="243"/>
        <end position="245"/>
    </location>
</feature>